<proteinExistence type="inferred from homology"/>
<dbReference type="EC" id="2.3.3.13" evidence="1"/>
<dbReference type="EMBL" id="CP000075">
    <property type="protein sequence ID" value="AAY36308.1"/>
    <property type="molecule type" value="Genomic_DNA"/>
</dbReference>
<dbReference type="RefSeq" id="WP_004406457.1">
    <property type="nucleotide sequence ID" value="NC_007005.1"/>
</dbReference>
<dbReference type="RefSeq" id="YP_234346.1">
    <property type="nucleotide sequence ID" value="NC_007005.1"/>
</dbReference>
<dbReference type="SMR" id="Q4ZX14"/>
<dbReference type="STRING" id="205918.Psyr_1257"/>
<dbReference type="KEGG" id="psb:Psyr_1257"/>
<dbReference type="PATRIC" id="fig|205918.7.peg.1289"/>
<dbReference type="eggNOG" id="COG0119">
    <property type="taxonomic scope" value="Bacteria"/>
</dbReference>
<dbReference type="HOGENOM" id="CLU_004588_3_0_6"/>
<dbReference type="OrthoDB" id="9803573at2"/>
<dbReference type="UniPathway" id="UPA00048">
    <property type="reaction ID" value="UER00070"/>
</dbReference>
<dbReference type="Proteomes" id="UP000000426">
    <property type="component" value="Chromosome"/>
</dbReference>
<dbReference type="GO" id="GO:0005737">
    <property type="term" value="C:cytoplasm"/>
    <property type="evidence" value="ECO:0007669"/>
    <property type="project" value="UniProtKB-SubCell"/>
</dbReference>
<dbReference type="GO" id="GO:0003852">
    <property type="term" value="F:2-isopropylmalate synthase activity"/>
    <property type="evidence" value="ECO:0007669"/>
    <property type="project" value="UniProtKB-UniRule"/>
</dbReference>
<dbReference type="GO" id="GO:0003985">
    <property type="term" value="F:acetyl-CoA C-acetyltransferase activity"/>
    <property type="evidence" value="ECO:0007669"/>
    <property type="project" value="UniProtKB-UniRule"/>
</dbReference>
<dbReference type="GO" id="GO:0000287">
    <property type="term" value="F:magnesium ion binding"/>
    <property type="evidence" value="ECO:0007669"/>
    <property type="project" value="UniProtKB-UniRule"/>
</dbReference>
<dbReference type="GO" id="GO:0009098">
    <property type="term" value="P:L-leucine biosynthetic process"/>
    <property type="evidence" value="ECO:0007669"/>
    <property type="project" value="UniProtKB-UniRule"/>
</dbReference>
<dbReference type="CDD" id="cd07942">
    <property type="entry name" value="DRE_TIM_LeuA"/>
    <property type="match status" value="1"/>
</dbReference>
<dbReference type="FunFam" id="3.20.20.70:FF:000045">
    <property type="entry name" value="2-isopropylmalate synthase"/>
    <property type="match status" value="1"/>
</dbReference>
<dbReference type="Gene3D" id="3.30.160.270">
    <property type="match status" value="1"/>
</dbReference>
<dbReference type="Gene3D" id="3.20.20.70">
    <property type="entry name" value="Aldolase class I"/>
    <property type="match status" value="1"/>
</dbReference>
<dbReference type="HAMAP" id="MF_00572">
    <property type="entry name" value="LeuA_type2"/>
    <property type="match status" value="1"/>
</dbReference>
<dbReference type="InterPro" id="IPR013709">
    <property type="entry name" value="2-isopropylmalate_synth_dimer"/>
</dbReference>
<dbReference type="InterPro" id="IPR002034">
    <property type="entry name" value="AIPM/Hcit_synth_CS"/>
</dbReference>
<dbReference type="InterPro" id="IPR013785">
    <property type="entry name" value="Aldolase_TIM"/>
</dbReference>
<dbReference type="InterPro" id="IPR005668">
    <property type="entry name" value="IPM_Synthase"/>
</dbReference>
<dbReference type="InterPro" id="IPR054692">
    <property type="entry name" value="LeuA-like_post-cat"/>
</dbReference>
<dbReference type="InterPro" id="IPR036230">
    <property type="entry name" value="LeuA_allosteric_dom_sf"/>
</dbReference>
<dbReference type="InterPro" id="IPR039371">
    <property type="entry name" value="LeuA_N_DRE-TIM"/>
</dbReference>
<dbReference type="InterPro" id="IPR000891">
    <property type="entry name" value="PYR_CT"/>
</dbReference>
<dbReference type="NCBIfam" id="TIGR00970">
    <property type="entry name" value="leuA_yeast"/>
    <property type="match status" value="1"/>
</dbReference>
<dbReference type="NCBIfam" id="NF002991">
    <property type="entry name" value="PRK03739.1"/>
    <property type="match status" value="1"/>
</dbReference>
<dbReference type="PANTHER" id="PTHR46911">
    <property type="match status" value="1"/>
</dbReference>
<dbReference type="PANTHER" id="PTHR46911:SF1">
    <property type="entry name" value="2-ISOPROPYLMALATE SYNTHASE"/>
    <property type="match status" value="1"/>
</dbReference>
<dbReference type="Pfam" id="PF00682">
    <property type="entry name" value="HMGL-like"/>
    <property type="match status" value="1"/>
</dbReference>
<dbReference type="Pfam" id="PF22615">
    <property type="entry name" value="IPMS_D2"/>
    <property type="match status" value="1"/>
</dbReference>
<dbReference type="Pfam" id="PF08502">
    <property type="entry name" value="LeuA_dimer"/>
    <property type="match status" value="1"/>
</dbReference>
<dbReference type="SMART" id="SM00917">
    <property type="entry name" value="LeuA_dimer"/>
    <property type="match status" value="1"/>
</dbReference>
<dbReference type="SUPFAM" id="SSF110921">
    <property type="entry name" value="2-isopropylmalate synthase LeuA, allosteric (dimerisation) domain"/>
    <property type="match status" value="1"/>
</dbReference>
<dbReference type="SUPFAM" id="SSF51569">
    <property type="entry name" value="Aldolase"/>
    <property type="match status" value="1"/>
</dbReference>
<dbReference type="SUPFAM" id="SSF89000">
    <property type="entry name" value="post-HMGL domain-like"/>
    <property type="match status" value="1"/>
</dbReference>
<dbReference type="PROSITE" id="PS00815">
    <property type="entry name" value="AIPM_HOMOCIT_SYNTH_1"/>
    <property type="match status" value="1"/>
</dbReference>
<dbReference type="PROSITE" id="PS00816">
    <property type="entry name" value="AIPM_HOMOCIT_SYNTH_2"/>
    <property type="match status" value="1"/>
</dbReference>
<dbReference type="PROSITE" id="PS50991">
    <property type="entry name" value="PYR_CT"/>
    <property type="match status" value="1"/>
</dbReference>
<organism>
    <name type="scientific">Pseudomonas syringae pv. syringae (strain B728a)</name>
    <dbReference type="NCBI Taxonomy" id="205918"/>
    <lineage>
        <taxon>Bacteria</taxon>
        <taxon>Pseudomonadati</taxon>
        <taxon>Pseudomonadota</taxon>
        <taxon>Gammaproteobacteria</taxon>
        <taxon>Pseudomonadales</taxon>
        <taxon>Pseudomonadaceae</taxon>
        <taxon>Pseudomonas</taxon>
        <taxon>Pseudomonas syringae</taxon>
    </lineage>
</organism>
<reference key="1">
    <citation type="journal article" date="2005" name="Proc. Natl. Acad. Sci. U.S.A.">
        <title>Comparison of the complete genome sequences of Pseudomonas syringae pv. syringae B728a and pv. tomato DC3000.</title>
        <authorList>
            <person name="Feil H."/>
            <person name="Feil W.S."/>
            <person name="Chain P."/>
            <person name="Larimer F."/>
            <person name="Dibartolo G."/>
            <person name="Copeland A."/>
            <person name="Lykidis A."/>
            <person name="Trong S."/>
            <person name="Nolan M."/>
            <person name="Goltsman E."/>
            <person name="Thiel J."/>
            <person name="Malfatti S."/>
            <person name="Loper J.E."/>
            <person name="Lapidus A."/>
            <person name="Detter J.C."/>
            <person name="Land M."/>
            <person name="Richardson P.M."/>
            <person name="Kyrpides N.C."/>
            <person name="Ivanova N."/>
            <person name="Lindow S.E."/>
        </authorList>
    </citation>
    <scope>NUCLEOTIDE SEQUENCE [LARGE SCALE GENOMIC DNA]</scope>
    <source>
        <strain>B728a</strain>
    </source>
</reference>
<gene>
    <name evidence="1" type="primary">leuA</name>
    <name type="ordered locus">Psyr_1257</name>
</gene>
<accession>Q4ZX14</accession>
<evidence type="ECO:0000255" key="1">
    <source>
        <dbReference type="HAMAP-Rule" id="MF_00572"/>
    </source>
</evidence>
<feature type="chain" id="PRO_1000025038" description="2-isopropylmalate synthase">
    <location>
        <begin position="1"/>
        <end position="556"/>
    </location>
</feature>
<feature type="domain" description="Pyruvate carboxyltransferase" evidence="1">
    <location>
        <begin position="33"/>
        <end position="307"/>
    </location>
</feature>
<feature type="region of interest" description="Regulatory domain" evidence="1">
    <location>
        <begin position="439"/>
        <end position="556"/>
    </location>
</feature>
<feature type="binding site" evidence="1">
    <location>
        <position position="42"/>
    </location>
    <ligand>
        <name>Mg(2+)</name>
        <dbReference type="ChEBI" id="CHEBI:18420"/>
    </ligand>
</feature>
<feature type="binding site" evidence="1">
    <location>
        <position position="246"/>
    </location>
    <ligand>
        <name>Mg(2+)</name>
        <dbReference type="ChEBI" id="CHEBI:18420"/>
    </ligand>
</feature>
<feature type="binding site" evidence="1">
    <location>
        <position position="248"/>
    </location>
    <ligand>
        <name>Mg(2+)</name>
        <dbReference type="ChEBI" id="CHEBI:18420"/>
    </ligand>
</feature>
<feature type="binding site" evidence="1">
    <location>
        <position position="282"/>
    </location>
    <ligand>
        <name>Mg(2+)</name>
        <dbReference type="ChEBI" id="CHEBI:18420"/>
    </ligand>
</feature>
<name>LEU1_PSEU2</name>
<protein>
    <recommendedName>
        <fullName evidence="1">2-isopropylmalate synthase</fullName>
        <ecNumber evidence="1">2.3.3.13</ecNumber>
    </recommendedName>
    <alternativeName>
        <fullName evidence="1">Alpha-IPM synthase</fullName>
    </alternativeName>
    <alternativeName>
        <fullName evidence="1">Alpha-isopropylmalate synthase</fullName>
    </alternativeName>
</protein>
<comment type="function">
    <text evidence="1">Catalyzes the condensation of the acetyl group of acetyl-CoA with 3-methyl-2-oxobutanoate (2-ketoisovalerate) to form 3-carboxy-3-hydroxy-4-methylpentanoate (2-isopropylmalate).</text>
</comment>
<comment type="catalytic activity">
    <reaction evidence="1">
        <text>3-methyl-2-oxobutanoate + acetyl-CoA + H2O = (2S)-2-isopropylmalate + CoA + H(+)</text>
        <dbReference type="Rhea" id="RHEA:21524"/>
        <dbReference type="ChEBI" id="CHEBI:1178"/>
        <dbReference type="ChEBI" id="CHEBI:11851"/>
        <dbReference type="ChEBI" id="CHEBI:15377"/>
        <dbReference type="ChEBI" id="CHEBI:15378"/>
        <dbReference type="ChEBI" id="CHEBI:57287"/>
        <dbReference type="ChEBI" id="CHEBI:57288"/>
        <dbReference type="EC" id="2.3.3.13"/>
    </reaction>
</comment>
<comment type="cofactor">
    <cofactor evidence="1">
        <name>Mg(2+)</name>
        <dbReference type="ChEBI" id="CHEBI:18420"/>
    </cofactor>
</comment>
<comment type="pathway">
    <text evidence="1">Amino-acid biosynthesis; L-leucine biosynthesis; L-leucine from 3-methyl-2-oxobutanoate: step 1/4.</text>
</comment>
<comment type="subunit">
    <text evidence="1">Homodimer.</text>
</comment>
<comment type="subcellular location">
    <subcellularLocation>
        <location evidence="1">Cytoplasm</location>
    </subcellularLocation>
</comment>
<comment type="similarity">
    <text evidence="1">Belongs to the alpha-IPM synthase/homocitrate synthase family. LeuA type 2 subfamily.</text>
</comment>
<keyword id="KW-0028">Amino-acid biosynthesis</keyword>
<keyword id="KW-0100">Branched-chain amino acid biosynthesis</keyword>
<keyword id="KW-0963">Cytoplasm</keyword>
<keyword id="KW-0432">Leucine biosynthesis</keyword>
<keyword id="KW-0460">Magnesium</keyword>
<keyword id="KW-0479">Metal-binding</keyword>
<keyword id="KW-0808">Transferase</keyword>
<sequence length="556" mass="61508">MTMLKDPSKKYRAFPTIDLPDRTWPSKTIDAVPIWCSSDLRDGNQSLIEPMDAAKKLRFWKTLVSVGVKEIEASFPSASQTDFDFVRTLIEDGHIPDDTTIQVLTQAREDLIARTFESLRGAKKAIVHLYNATCPSFRRIVFNQDKAGVKEIAVNAAKLFVKYAAQQPETQWTFQYSPETFSATELEFAKEVCDAVIEVWNPTPENKVILNLPATVEVATPNIYADQIEWFGRNITRRDSVLISLHTHNDRGTGVAATELGLMAGADRVEGCLFGNGERTGNVDLVTVALNLYTQGINPGLDFSDIDGVRKVVEECNQIPVHPRHPYVGDLVHTAFSGSHQDAIRKGFTQQKEGELWEVPYLPIDPADIGRSYEAVIRVNSQSGKGGIAYLLEQEYGISLPRRMQIEFSQVVQGETDRLGLEMTAEQIHSLLRREYLQANVPYALISHKLQEENGNSSVDAEVHVDGETQHWRGKGKGALEALVAGLPVAVEIMDYNEHAIGSGTTAKAAAYIELRVNGERAVHGVGIDENITTASFRALFSALNRSLSQTQAKAA</sequence>